<protein>
    <recommendedName>
        <fullName evidence="1">Endoribonuclease YbeY</fullName>
        <ecNumber evidence="1">3.1.-.-</ecNumber>
    </recommendedName>
</protein>
<accession>C1CK48</accession>
<name>YBEY_STRZP</name>
<sequence length="165" mass="19245">MYIEMVDETGQVSKEMLQQTQEILEFAAQKLGKEDKEMAVTFVTNERSHELNLEYRDTDRPTDVISLEYKPELEIAFDEEDLLENPELAEMMSEFDAYIGELFISIDKAHEQAEEYGHSFEREMGFLAVHGFLHINGYDHYTPEEEAEMFGLQEEILTAYGLTRQ</sequence>
<comment type="function">
    <text evidence="1">Single strand-specific metallo-endoribonuclease involved in late-stage 70S ribosome quality control and in maturation of the 3' terminus of the 16S rRNA.</text>
</comment>
<comment type="cofactor">
    <cofactor evidence="1">
        <name>Zn(2+)</name>
        <dbReference type="ChEBI" id="CHEBI:29105"/>
    </cofactor>
    <text evidence="1">Binds 1 zinc ion.</text>
</comment>
<comment type="subcellular location">
    <subcellularLocation>
        <location evidence="1">Cytoplasm</location>
    </subcellularLocation>
</comment>
<comment type="similarity">
    <text evidence="1">Belongs to the endoribonuclease YbeY family.</text>
</comment>
<gene>
    <name evidence="1" type="primary">ybeY</name>
    <name type="ordered locus">SPP_0973</name>
</gene>
<reference key="1">
    <citation type="journal article" date="2010" name="Genome Biol.">
        <title>Structure and dynamics of the pan-genome of Streptococcus pneumoniae and closely related species.</title>
        <authorList>
            <person name="Donati C."/>
            <person name="Hiller N.L."/>
            <person name="Tettelin H."/>
            <person name="Muzzi A."/>
            <person name="Croucher N.J."/>
            <person name="Angiuoli S.V."/>
            <person name="Oggioni M."/>
            <person name="Dunning Hotopp J.C."/>
            <person name="Hu F.Z."/>
            <person name="Riley D.R."/>
            <person name="Covacci A."/>
            <person name="Mitchell T.J."/>
            <person name="Bentley S.D."/>
            <person name="Kilian M."/>
            <person name="Ehrlich G.D."/>
            <person name="Rappuoli R."/>
            <person name="Moxon E.R."/>
            <person name="Masignani V."/>
        </authorList>
    </citation>
    <scope>NUCLEOTIDE SEQUENCE [LARGE SCALE GENOMIC DNA]</scope>
    <source>
        <strain>P1031</strain>
    </source>
</reference>
<evidence type="ECO:0000255" key="1">
    <source>
        <dbReference type="HAMAP-Rule" id="MF_00009"/>
    </source>
</evidence>
<keyword id="KW-0963">Cytoplasm</keyword>
<keyword id="KW-0255">Endonuclease</keyword>
<keyword id="KW-0378">Hydrolase</keyword>
<keyword id="KW-0479">Metal-binding</keyword>
<keyword id="KW-0540">Nuclease</keyword>
<keyword id="KW-0690">Ribosome biogenesis</keyword>
<keyword id="KW-0698">rRNA processing</keyword>
<keyword id="KW-0862">Zinc</keyword>
<organism>
    <name type="scientific">Streptococcus pneumoniae (strain P1031)</name>
    <dbReference type="NCBI Taxonomy" id="488223"/>
    <lineage>
        <taxon>Bacteria</taxon>
        <taxon>Bacillati</taxon>
        <taxon>Bacillota</taxon>
        <taxon>Bacilli</taxon>
        <taxon>Lactobacillales</taxon>
        <taxon>Streptococcaceae</taxon>
        <taxon>Streptococcus</taxon>
    </lineage>
</organism>
<dbReference type="EC" id="3.1.-.-" evidence="1"/>
<dbReference type="EMBL" id="CP000920">
    <property type="protein sequence ID" value="ACO20825.1"/>
    <property type="molecule type" value="Genomic_DNA"/>
</dbReference>
<dbReference type="RefSeq" id="WP_000275156.1">
    <property type="nucleotide sequence ID" value="NC_012467.1"/>
</dbReference>
<dbReference type="SMR" id="C1CK48"/>
<dbReference type="GeneID" id="93739770"/>
<dbReference type="KEGG" id="spp:SPP_0973"/>
<dbReference type="HOGENOM" id="CLU_106710_3_0_9"/>
<dbReference type="GO" id="GO:0005737">
    <property type="term" value="C:cytoplasm"/>
    <property type="evidence" value="ECO:0007669"/>
    <property type="project" value="UniProtKB-SubCell"/>
</dbReference>
<dbReference type="GO" id="GO:0004222">
    <property type="term" value="F:metalloendopeptidase activity"/>
    <property type="evidence" value="ECO:0007669"/>
    <property type="project" value="InterPro"/>
</dbReference>
<dbReference type="GO" id="GO:0004521">
    <property type="term" value="F:RNA endonuclease activity"/>
    <property type="evidence" value="ECO:0007669"/>
    <property type="project" value="UniProtKB-UniRule"/>
</dbReference>
<dbReference type="GO" id="GO:0008270">
    <property type="term" value="F:zinc ion binding"/>
    <property type="evidence" value="ECO:0007669"/>
    <property type="project" value="UniProtKB-UniRule"/>
</dbReference>
<dbReference type="GO" id="GO:0006364">
    <property type="term" value="P:rRNA processing"/>
    <property type="evidence" value="ECO:0007669"/>
    <property type="project" value="UniProtKB-UniRule"/>
</dbReference>
<dbReference type="Gene3D" id="3.40.390.30">
    <property type="entry name" value="Metalloproteases ('zincins'), catalytic domain"/>
    <property type="match status" value="1"/>
</dbReference>
<dbReference type="HAMAP" id="MF_00009">
    <property type="entry name" value="Endoribonucl_YbeY"/>
    <property type="match status" value="1"/>
</dbReference>
<dbReference type="InterPro" id="IPR023091">
    <property type="entry name" value="MetalPrtase_cat_dom_sf_prd"/>
</dbReference>
<dbReference type="InterPro" id="IPR002036">
    <property type="entry name" value="YbeY"/>
</dbReference>
<dbReference type="InterPro" id="IPR020549">
    <property type="entry name" value="YbeY_CS"/>
</dbReference>
<dbReference type="NCBIfam" id="TIGR00043">
    <property type="entry name" value="rRNA maturation RNase YbeY"/>
    <property type="match status" value="1"/>
</dbReference>
<dbReference type="PANTHER" id="PTHR46986">
    <property type="entry name" value="ENDORIBONUCLEASE YBEY, CHLOROPLASTIC"/>
    <property type="match status" value="1"/>
</dbReference>
<dbReference type="PANTHER" id="PTHR46986:SF1">
    <property type="entry name" value="ENDORIBONUCLEASE YBEY, CHLOROPLASTIC"/>
    <property type="match status" value="1"/>
</dbReference>
<dbReference type="Pfam" id="PF02130">
    <property type="entry name" value="YbeY"/>
    <property type="match status" value="1"/>
</dbReference>
<dbReference type="SUPFAM" id="SSF55486">
    <property type="entry name" value="Metalloproteases ('zincins'), catalytic domain"/>
    <property type="match status" value="1"/>
</dbReference>
<dbReference type="PROSITE" id="PS01306">
    <property type="entry name" value="UPF0054"/>
    <property type="match status" value="1"/>
</dbReference>
<proteinExistence type="inferred from homology"/>
<feature type="chain" id="PRO_1000199999" description="Endoribonuclease YbeY">
    <location>
        <begin position="1"/>
        <end position="165"/>
    </location>
</feature>
<feature type="binding site" evidence="1">
    <location>
        <position position="130"/>
    </location>
    <ligand>
        <name>Zn(2+)</name>
        <dbReference type="ChEBI" id="CHEBI:29105"/>
        <note>catalytic</note>
    </ligand>
</feature>
<feature type="binding site" evidence="1">
    <location>
        <position position="134"/>
    </location>
    <ligand>
        <name>Zn(2+)</name>
        <dbReference type="ChEBI" id="CHEBI:29105"/>
        <note>catalytic</note>
    </ligand>
</feature>
<feature type="binding site" evidence="1">
    <location>
        <position position="140"/>
    </location>
    <ligand>
        <name>Zn(2+)</name>
        <dbReference type="ChEBI" id="CHEBI:29105"/>
        <note>catalytic</note>
    </ligand>
</feature>